<comment type="function">
    <text evidence="1 3">The small GTPases Rab are key regulators of intracellular membrane trafficking, from the formation of transport vesicles to their fusion with membranes. Rabs cycle between an inactive GDP-bound form and an active GTP-bound form that is able to recruit to membranes different set of downstream effectors directly responsible for vesicle formation, movement, tethering and fusion. That Rab is mainly involved in the biosynthetic transport of proteins from the Golgi to the plasma membrane. Also plays a specific role in asymmetric protein transport to the plasma membrane within the polarized neuron and epithelial cells. In neurons, it is involved in axonogenesis through regulation of vesicular membrane trafficking toward the axonal plasma membrane while in epithelial cells, it regulates transport from the Golgi to the basolateral membrane. Moreover, may play a role in the basolateral recycling pathway and in phagosome maturation. Finally, may play a role in endoplasmic reticulum dynamics and morphology controlling tubulation along microtubules and tubules fusion (By similarity). May participate in the export of neosynthesized proteins through a Rab-dependent endosomal export route (By similarity).</text>
</comment>
<comment type="catalytic activity">
    <reaction evidence="3">
        <text>GTP + H2O = GDP + phosphate + H(+)</text>
        <dbReference type="Rhea" id="RHEA:19669"/>
        <dbReference type="ChEBI" id="CHEBI:15377"/>
        <dbReference type="ChEBI" id="CHEBI:15378"/>
        <dbReference type="ChEBI" id="CHEBI:37565"/>
        <dbReference type="ChEBI" id="CHEBI:43474"/>
        <dbReference type="ChEBI" id="CHEBI:58189"/>
        <dbReference type="EC" id="3.6.5.2"/>
    </reaction>
    <physiologicalReaction direction="left-to-right" evidence="3">
        <dbReference type="Rhea" id="RHEA:19670"/>
    </physiologicalReaction>
</comment>
<comment type="cofactor">
    <cofactor evidence="3">
        <name>Mg(2+)</name>
        <dbReference type="ChEBI" id="CHEBI:18420"/>
    </cofactor>
</comment>
<comment type="activity regulation">
    <text evidence="3">Regulated by guanine nucleotide exchange factors (GEFs) which promote the exchange of bound GDP for free GTP. Regulated by GTPase activating proteins (GAPs) which increase the GTP hydrolysis activity. Inhibited by GDP dissociation inhibitors (GDIs) which prevent Rab-GDP dissociation.</text>
</comment>
<comment type="subcellular location">
    <subcellularLocation>
        <location evidence="7">Cytoplasmic vesicle membrane</location>
        <topology evidence="7">Lipid-anchor</topology>
        <orientation evidence="7">Cytoplasmic side</orientation>
    </subcellularLocation>
    <subcellularLocation>
        <location evidence="2">Golgi apparatus</location>
        <location evidence="2">trans-Golgi network membrane</location>
    </subcellularLocation>
    <subcellularLocation>
        <location evidence="3">Endosome membrane</location>
    </subcellularLocation>
    <subcellularLocation>
        <location evidence="2">Recycling endosome membrane</location>
    </subcellularLocation>
    <subcellularLocation>
        <location evidence="2">Cytoplasmic vesicle</location>
        <location evidence="2">Phagosome membrane</location>
    </subcellularLocation>
    <subcellularLocation>
        <location evidence="4">Cell projection</location>
        <location evidence="4">Cilium</location>
    </subcellularLocation>
    <subcellularLocation>
        <location evidence="4">Endoplasmic reticulum membrane</location>
    </subcellularLocation>
    <text evidence="2 3 4">Associates with SLC2A4/GLUT4 storage vesicles (By similarity). Localizes to the base of the cilium (By similarity). Transiently associates with phagosomes (By similarity). Localizes to the endoplasmic reticulum at domains of new tubule growth (By similarity).</text>
</comment>
<comment type="domain">
    <text evidence="5">Switch 1, switch 2 and the interswitch regions are characteristic of Rab GTPases and mediate the interactions with Rab downstream effectors. The switch regions undergo conformational changes upon nucleotide binding which drives interaction with specific sets of effector proteins, with most effectors only binding to GTP-bound Rab.</text>
</comment>
<comment type="similarity">
    <text evidence="7">Belongs to the small GTPase superfamily. Rab family.</text>
</comment>
<organism>
    <name type="scientific">Diplobatis ommata</name>
    <name type="common">Ocellated electric ray</name>
    <name type="synonym">Discopyge ommata</name>
    <dbReference type="NCBI Taxonomy" id="1870830"/>
    <lineage>
        <taxon>Eukaryota</taxon>
        <taxon>Metazoa</taxon>
        <taxon>Chordata</taxon>
        <taxon>Craniata</taxon>
        <taxon>Vertebrata</taxon>
        <taxon>Chondrichthyes</taxon>
        <taxon>Elasmobranchii</taxon>
        <taxon>Batoidea</taxon>
        <taxon>Torpediniformes</taxon>
        <taxon>Narcinidae</taxon>
        <taxon>Diplobatis</taxon>
    </lineage>
</organism>
<sequence length="200" mass="22623">MAKKTYDLLFKLLLIGDSGVGKTCVLFRFSDDAFNTTFISTIGIDFKIKTVELHGKKIKLQIWDTAGQERFHTITTSYYRGAMGIMLVYDITNAKSFENISKWLRNIDEHANEDVERMLLGNKCDMEDKRVVLKSKGEQIAREHAIRFFETSAKANINIEKAFLTLAEDILQKTPVKEPDRENVDISTTGGGTGLKKCCS</sequence>
<accession>P22127</accession>
<proteinExistence type="evidence at transcript level"/>
<reference key="1">
    <citation type="journal article" date="1991" name="J. Biol. Chem.">
        <title>A family of ras-like GTP-binding proteins expressed in electromotor neurons.</title>
        <authorList>
            <person name="Ngsee J.K."/>
            <person name="Elferink L.A."/>
            <person name="Scheller R.H."/>
        </authorList>
    </citation>
    <scope>NUCLEOTIDE SEQUENCE [MRNA]</scope>
    <source>
        <tissue>Electric lobe</tissue>
    </source>
</reference>
<dbReference type="EC" id="3.6.5.2" evidence="3"/>
<dbReference type="EMBL" id="M38390">
    <property type="protein sequence ID" value="AAA49230.1"/>
    <property type="molecule type" value="mRNA"/>
</dbReference>
<dbReference type="PIR" id="A38625">
    <property type="entry name" value="A38625"/>
</dbReference>
<dbReference type="SMR" id="P22127"/>
<dbReference type="GO" id="GO:0005929">
    <property type="term" value="C:cilium"/>
    <property type="evidence" value="ECO:0000250"/>
    <property type="project" value="UniProtKB"/>
</dbReference>
<dbReference type="GO" id="GO:0005789">
    <property type="term" value="C:endoplasmic reticulum membrane"/>
    <property type="evidence" value="ECO:0000250"/>
    <property type="project" value="UniProtKB"/>
</dbReference>
<dbReference type="GO" id="GO:0071782">
    <property type="term" value="C:endoplasmic reticulum tubular network"/>
    <property type="evidence" value="ECO:0000250"/>
    <property type="project" value="UniProtKB"/>
</dbReference>
<dbReference type="GO" id="GO:0005768">
    <property type="term" value="C:endosome"/>
    <property type="evidence" value="ECO:0000250"/>
    <property type="project" value="UniProtKB"/>
</dbReference>
<dbReference type="GO" id="GO:0010008">
    <property type="term" value="C:endosome membrane"/>
    <property type="evidence" value="ECO:0000250"/>
    <property type="project" value="UniProtKB"/>
</dbReference>
<dbReference type="GO" id="GO:0005794">
    <property type="term" value="C:Golgi apparatus"/>
    <property type="evidence" value="ECO:0000250"/>
    <property type="project" value="UniProtKB"/>
</dbReference>
<dbReference type="GO" id="GO:0032593">
    <property type="term" value="C:insulin-responsive compartment"/>
    <property type="evidence" value="ECO:0000250"/>
    <property type="project" value="UniProtKB"/>
</dbReference>
<dbReference type="GO" id="GO:0030670">
    <property type="term" value="C:phagocytic vesicle membrane"/>
    <property type="evidence" value="ECO:0007669"/>
    <property type="project" value="UniProtKB-SubCell"/>
</dbReference>
<dbReference type="GO" id="GO:0055037">
    <property type="term" value="C:recycling endosome"/>
    <property type="evidence" value="ECO:0000250"/>
    <property type="project" value="UniProtKB"/>
</dbReference>
<dbReference type="GO" id="GO:0055038">
    <property type="term" value="C:recycling endosome membrane"/>
    <property type="evidence" value="ECO:0007669"/>
    <property type="project" value="UniProtKB-SubCell"/>
</dbReference>
<dbReference type="GO" id="GO:0005802">
    <property type="term" value="C:trans-Golgi network"/>
    <property type="evidence" value="ECO:0000250"/>
    <property type="project" value="UniProtKB"/>
</dbReference>
<dbReference type="GO" id="GO:0019003">
    <property type="term" value="F:GDP binding"/>
    <property type="evidence" value="ECO:0000250"/>
    <property type="project" value="UniProtKB"/>
</dbReference>
<dbReference type="GO" id="GO:0005525">
    <property type="term" value="F:GTP binding"/>
    <property type="evidence" value="ECO:0000250"/>
    <property type="project" value="UniProtKB"/>
</dbReference>
<dbReference type="GO" id="GO:0003924">
    <property type="term" value="F:GTPase activity"/>
    <property type="evidence" value="ECO:0007669"/>
    <property type="project" value="InterPro"/>
</dbReference>
<dbReference type="GO" id="GO:0007409">
    <property type="term" value="P:axonogenesis"/>
    <property type="evidence" value="ECO:0000250"/>
    <property type="project" value="UniProtKB"/>
</dbReference>
<dbReference type="GO" id="GO:0032869">
    <property type="term" value="P:cellular response to insulin stimulus"/>
    <property type="evidence" value="ECO:0000250"/>
    <property type="project" value="UniProtKB"/>
</dbReference>
<dbReference type="GO" id="GO:0071786">
    <property type="term" value="P:endoplasmic reticulum tubular network organization"/>
    <property type="evidence" value="ECO:0000250"/>
    <property type="project" value="UniProtKB"/>
</dbReference>
<dbReference type="GO" id="GO:0016197">
    <property type="term" value="P:endosomal transport"/>
    <property type="evidence" value="ECO:0000250"/>
    <property type="project" value="UniProtKB"/>
</dbReference>
<dbReference type="GO" id="GO:0045200">
    <property type="term" value="P:establishment of neuroblast polarity"/>
    <property type="evidence" value="ECO:0000250"/>
    <property type="project" value="UniProtKB"/>
</dbReference>
<dbReference type="GO" id="GO:0097051">
    <property type="term" value="P:establishment of protein localization to endoplasmic reticulum membrane"/>
    <property type="evidence" value="ECO:0000250"/>
    <property type="project" value="UniProtKB"/>
</dbReference>
<dbReference type="GO" id="GO:0043001">
    <property type="term" value="P:Golgi to plasma membrane protein transport"/>
    <property type="evidence" value="ECO:0000250"/>
    <property type="project" value="UniProtKB"/>
</dbReference>
<dbReference type="GO" id="GO:0006893">
    <property type="term" value="P:Golgi to plasma membrane transport"/>
    <property type="evidence" value="ECO:0000250"/>
    <property type="project" value="UniProtKB"/>
</dbReference>
<dbReference type="GO" id="GO:0030859">
    <property type="term" value="P:polarized epithelial cell differentiation"/>
    <property type="evidence" value="ECO:0000250"/>
    <property type="project" value="UniProtKB"/>
</dbReference>
<dbReference type="GO" id="GO:1903361">
    <property type="term" value="P:protein localization to basolateral plasma membrane"/>
    <property type="evidence" value="ECO:0000250"/>
    <property type="project" value="UniProtKB"/>
</dbReference>
<dbReference type="GO" id="GO:0072659">
    <property type="term" value="P:protein localization to plasma membrane"/>
    <property type="evidence" value="ECO:0000250"/>
    <property type="project" value="UniProtKB"/>
</dbReference>
<dbReference type="GO" id="GO:0016192">
    <property type="term" value="P:vesicle-mediated transport"/>
    <property type="evidence" value="ECO:0000250"/>
    <property type="project" value="UniProtKB"/>
</dbReference>
<dbReference type="CDD" id="cd01867">
    <property type="entry name" value="Rab8_Rab10_Rab13_like"/>
    <property type="match status" value="1"/>
</dbReference>
<dbReference type="FunFam" id="3.40.50.300:FF:000202">
    <property type="entry name" value="ras-related protein Rab-8A"/>
    <property type="match status" value="1"/>
</dbReference>
<dbReference type="Gene3D" id="3.40.50.300">
    <property type="entry name" value="P-loop containing nucleotide triphosphate hydrolases"/>
    <property type="match status" value="1"/>
</dbReference>
<dbReference type="InterPro" id="IPR027417">
    <property type="entry name" value="P-loop_NTPase"/>
</dbReference>
<dbReference type="InterPro" id="IPR005225">
    <property type="entry name" value="Small_GTP-bd"/>
</dbReference>
<dbReference type="InterPro" id="IPR001806">
    <property type="entry name" value="Small_GTPase"/>
</dbReference>
<dbReference type="InterPro" id="IPR050305">
    <property type="entry name" value="Small_GTPase_Rab"/>
</dbReference>
<dbReference type="NCBIfam" id="TIGR00231">
    <property type="entry name" value="small_GTP"/>
    <property type="match status" value="1"/>
</dbReference>
<dbReference type="PANTHER" id="PTHR47980">
    <property type="entry name" value="LD44762P"/>
    <property type="match status" value="1"/>
</dbReference>
<dbReference type="Pfam" id="PF00071">
    <property type="entry name" value="Ras"/>
    <property type="match status" value="1"/>
</dbReference>
<dbReference type="PRINTS" id="PR00449">
    <property type="entry name" value="RASTRNSFRMNG"/>
</dbReference>
<dbReference type="SMART" id="SM00177">
    <property type="entry name" value="ARF"/>
    <property type="match status" value="1"/>
</dbReference>
<dbReference type="SMART" id="SM00175">
    <property type="entry name" value="RAB"/>
    <property type="match status" value="1"/>
</dbReference>
<dbReference type="SMART" id="SM00176">
    <property type="entry name" value="RAN"/>
    <property type="match status" value="1"/>
</dbReference>
<dbReference type="SMART" id="SM00173">
    <property type="entry name" value="RAS"/>
    <property type="match status" value="1"/>
</dbReference>
<dbReference type="SMART" id="SM00174">
    <property type="entry name" value="RHO"/>
    <property type="match status" value="1"/>
</dbReference>
<dbReference type="SUPFAM" id="SSF52540">
    <property type="entry name" value="P-loop containing nucleoside triphosphate hydrolases"/>
    <property type="match status" value="1"/>
</dbReference>
<dbReference type="PROSITE" id="PS51419">
    <property type="entry name" value="RAB"/>
    <property type="match status" value="1"/>
</dbReference>
<evidence type="ECO:0000250" key="1"/>
<evidence type="ECO:0000250" key="2">
    <source>
        <dbReference type="UniProtKB" id="P24409"/>
    </source>
</evidence>
<evidence type="ECO:0000250" key="3">
    <source>
        <dbReference type="UniProtKB" id="P61026"/>
    </source>
</evidence>
<evidence type="ECO:0000250" key="4">
    <source>
        <dbReference type="UniProtKB" id="P61027"/>
    </source>
</evidence>
<evidence type="ECO:0000250" key="5">
    <source>
        <dbReference type="UniProtKB" id="P62820"/>
    </source>
</evidence>
<evidence type="ECO:0000256" key="6">
    <source>
        <dbReference type="SAM" id="MobiDB-lite"/>
    </source>
</evidence>
<evidence type="ECO:0000305" key="7"/>
<name>RAB10_DIPOM</name>
<feature type="chain" id="PRO_0000121149" description="Ras-related protein Rab-10">
    <location>
        <begin position="1"/>
        <end position="200"/>
    </location>
</feature>
<feature type="region of interest" description="Disordered" evidence="6">
    <location>
        <begin position="181"/>
        <end position="200"/>
    </location>
</feature>
<feature type="short sequence motif" description="Switch 1" evidence="5">
    <location>
        <begin position="32"/>
        <end position="46"/>
    </location>
</feature>
<feature type="short sequence motif" description="Switch 2" evidence="5">
    <location>
        <begin position="64"/>
        <end position="81"/>
    </location>
</feature>
<feature type="binding site" evidence="3">
    <location>
        <position position="18"/>
    </location>
    <ligand>
        <name>GTP</name>
        <dbReference type="ChEBI" id="CHEBI:37565"/>
    </ligand>
</feature>
<feature type="binding site" evidence="3">
    <location>
        <position position="19"/>
    </location>
    <ligand>
        <name>GTP</name>
        <dbReference type="ChEBI" id="CHEBI:37565"/>
    </ligand>
</feature>
<feature type="binding site" evidence="3">
    <location>
        <position position="20"/>
    </location>
    <ligand>
        <name>GTP</name>
        <dbReference type="ChEBI" id="CHEBI:37565"/>
    </ligand>
</feature>
<feature type="binding site" evidence="3">
    <location>
        <position position="21"/>
    </location>
    <ligand>
        <name>GTP</name>
        <dbReference type="ChEBI" id="CHEBI:37565"/>
    </ligand>
</feature>
<feature type="binding site" evidence="3">
    <location>
        <position position="22"/>
    </location>
    <ligand>
        <name>GTP</name>
        <dbReference type="ChEBI" id="CHEBI:37565"/>
    </ligand>
</feature>
<feature type="binding site" evidence="3">
    <location>
        <position position="23"/>
    </location>
    <ligand>
        <name>GTP</name>
        <dbReference type="ChEBI" id="CHEBI:37565"/>
    </ligand>
</feature>
<feature type="binding site" evidence="3">
    <location>
        <position position="23"/>
    </location>
    <ligand>
        <name>Mg(2+)</name>
        <dbReference type="ChEBI" id="CHEBI:18420"/>
    </ligand>
</feature>
<feature type="binding site" evidence="3">
    <location>
        <position position="24"/>
    </location>
    <ligand>
        <name>GTP</name>
        <dbReference type="ChEBI" id="CHEBI:37565"/>
    </ligand>
</feature>
<feature type="binding site" evidence="3">
    <location>
        <position position="35"/>
    </location>
    <ligand>
        <name>GTP</name>
        <dbReference type="ChEBI" id="CHEBI:37565"/>
    </ligand>
</feature>
<feature type="binding site" evidence="3">
    <location>
        <position position="36"/>
    </location>
    <ligand>
        <name>GTP</name>
        <dbReference type="ChEBI" id="CHEBI:37565"/>
    </ligand>
</feature>
<feature type="binding site" evidence="3">
    <location>
        <position position="40"/>
    </location>
    <ligand>
        <name>GTP</name>
        <dbReference type="ChEBI" id="CHEBI:37565"/>
    </ligand>
</feature>
<feature type="binding site" evidence="3">
    <location>
        <position position="41"/>
    </location>
    <ligand>
        <name>GTP</name>
        <dbReference type="ChEBI" id="CHEBI:37565"/>
    </ligand>
</feature>
<feature type="binding site" evidence="3">
    <location>
        <position position="41"/>
    </location>
    <ligand>
        <name>Mg(2+)</name>
        <dbReference type="ChEBI" id="CHEBI:18420"/>
    </ligand>
</feature>
<feature type="binding site" evidence="3">
    <location>
        <position position="64"/>
    </location>
    <ligand>
        <name>Mg(2+)</name>
        <dbReference type="ChEBI" id="CHEBI:18420"/>
    </ligand>
</feature>
<feature type="binding site" evidence="3">
    <location>
        <position position="67"/>
    </location>
    <ligand>
        <name>GTP</name>
        <dbReference type="ChEBI" id="CHEBI:37565"/>
    </ligand>
</feature>
<feature type="binding site" evidence="3">
    <location>
        <position position="122"/>
    </location>
    <ligand>
        <name>GTP</name>
        <dbReference type="ChEBI" id="CHEBI:37565"/>
    </ligand>
</feature>
<feature type="binding site" evidence="3">
    <location>
        <position position="123"/>
    </location>
    <ligand>
        <name>GTP</name>
        <dbReference type="ChEBI" id="CHEBI:37565"/>
    </ligand>
</feature>
<feature type="binding site" evidence="3">
    <location>
        <position position="125"/>
    </location>
    <ligand>
        <name>GTP</name>
        <dbReference type="ChEBI" id="CHEBI:37565"/>
    </ligand>
</feature>
<feature type="binding site" evidence="3">
    <location>
        <position position="126"/>
    </location>
    <ligand>
        <name>GTP</name>
        <dbReference type="ChEBI" id="CHEBI:37565"/>
    </ligand>
</feature>
<feature type="binding site" evidence="3">
    <location>
        <position position="152"/>
    </location>
    <ligand>
        <name>GTP</name>
        <dbReference type="ChEBI" id="CHEBI:37565"/>
    </ligand>
</feature>
<feature type="binding site" evidence="3">
    <location>
        <position position="153"/>
    </location>
    <ligand>
        <name>GTP</name>
        <dbReference type="ChEBI" id="CHEBI:37565"/>
    </ligand>
</feature>
<feature type="binding site" evidence="3">
    <location>
        <position position="154"/>
    </location>
    <ligand>
        <name>GTP</name>
        <dbReference type="ChEBI" id="CHEBI:37565"/>
    </ligand>
</feature>
<feature type="lipid moiety-binding region" description="S-geranylgeranyl cysteine" evidence="1">
    <location>
        <position position="198"/>
    </location>
</feature>
<feature type="lipid moiety-binding region" description="S-geranylgeranyl cysteine" evidence="1">
    <location>
        <position position="199"/>
    </location>
</feature>
<keyword id="KW-0966">Cell projection</keyword>
<keyword id="KW-0968">Cytoplasmic vesicle</keyword>
<keyword id="KW-0256">Endoplasmic reticulum</keyword>
<keyword id="KW-0967">Endosome</keyword>
<keyword id="KW-0333">Golgi apparatus</keyword>
<keyword id="KW-0342">GTP-binding</keyword>
<keyword id="KW-0378">Hydrolase</keyword>
<keyword id="KW-0449">Lipoprotein</keyword>
<keyword id="KW-0460">Magnesium</keyword>
<keyword id="KW-0472">Membrane</keyword>
<keyword id="KW-0479">Metal-binding</keyword>
<keyword id="KW-0547">Nucleotide-binding</keyword>
<keyword id="KW-0636">Prenylation</keyword>
<keyword id="KW-0653">Protein transport</keyword>
<keyword id="KW-0813">Transport</keyword>
<protein>
    <recommendedName>
        <fullName>Ras-related protein Rab-10</fullName>
        <shortName>ORA1</shortName>
        <ecNumber evidence="3">3.6.5.2</ecNumber>
    </recommendedName>
</protein>